<comment type="function">
    <text evidence="3 4">E3 ubiquitin-protein ligase that specifically binds poly-ADP-ribosylated (PARsylated) proteins and mediates their ubiquitination and subsequent degradation. May regulate many important biological processes, such as cell survival and DNA damage response. Acts as an activator of the Wnt signaling pathway by mediating the ubiquitination of PARsylated AXIN1 and AXIN2, 2 key components of the beta-catenin destruction complex. Acts in cooperation with tankyrase proteins (TNKS and TNKS2), which mediate PARsylation of target proteins AXIN1, AXIN2, BLZF1, CASC3, TNKS and TNKS2. Recognizes and binds tankyrase-dependent PARsylated proteins via its WWE domain and mediates their ubiquitination, leading to their degradation. Different ubiquitin linkage types have been observed: TNKS2 undergoes ubiquitination at 'Lys-48' and 'Lys-63', while AXIN1 is only ubiquitinated at 'Lys-48'. May regulate TNKS and TNKS2 subcellular location, preventing aggregation at a centrosomal location. Neuroprotective protein (By similarity). Protects the brain against N-methyl-D-aspartate (NMDA) receptor-mediated glutamate excitotoxicity and ischemia, by interfering with PAR-induced cell death, called parthanatos (By similarity). Prevents nuclear translocation of AIFM1 in a PAR-binding dependent manner (By similarity). Does not affect PARP1 activation. Protects against cell death induced by DNA damaging agents, such as N-methyl-N-nitro-N-nitrosoguanidine (MNNG) and rescues cells from G1 arrest (By similarity). Promotes cell survival after gamma-irradiation. Facilitates DNA repair (By similarity).</text>
</comment>
<comment type="catalytic activity">
    <reaction>
        <text>S-ubiquitinyl-[E2 ubiquitin-conjugating enzyme]-L-cysteine + [acceptor protein]-L-lysine = [E2 ubiquitin-conjugating enzyme]-L-cysteine + N(6)-ubiquitinyl-[acceptor protein]-L-lysine.</text>
        <dbReference type="EC" id="2.3.2.27"/>
    </reaction>
</comment>
<comment type="pathway">
    <text>Protein modification; protein ubiquitination.</text>
</comment>
<comment type="subunit">
    <text evidence="1">Can form homooligomers. Interacts with PARsylated AXIN1, AXIN2, BLZF1, CASC3, H1-2, IPO7, LIG3, NCL, PARP1, XRCC1, XRCC5 and XRCC6. Interacts with DDB1, DHX15, IQGAP1, LRPPRC, PARP2, PRKDC, RUVBL2, TNKS1 and TNKS2. Binding often leads to interactor ubiquitination, in the presence of the appropriate E1 and E2 enzymes, and proteasomal degradation (By similarity).</text>
</comment>
<comment type="subcellular location">
    <subcellularLocation>
        <location evidence="1">Cytoplasm</location>
        <location evidence="1">Cytosol</location>
    </subcellularLocation>
    <subcellularLocation>
        <location evidence="1">Nucleus</location>
    </subcellularLocation>
    <text evidence="1">Translocates to the nucleus after DNA damage, such as laser-induced DNA breaks, and concentrates at DNA breaks. This translocation requires PARP1 activation and PAR-binding (By similarity).</text>
</comment>
<comment type="domain">
    <text evidence="1">The WWE domain mediates non-covalent poly(ADP-ribose)-binding.</text>
</comment>
<comment type="PTM">
    <text evidence="1">Ubiquitinated; autoubiquitinated. Autoubiquitination is enhanced upon poly(ADP-ribose)-binding (By similarity).</text>
</comment>
<evidence type="ECO:0000250" key="1"/>
<evidence type="ECO:0000250" key="2">
    <source>
        <dbReference type="UniProtKB" id="Q5XIK5"/>
    </source>
</evidence>
<evidence type="ECO:0000250" key="3">
    <source>
        <dbReference type="UniProtKB" id="Q9CZW6"/>
    </source>
</evidence>
<evidence type="ECO:0000250" key="4">
    <source>
        <dbReference type="UniProtKB" id="Q9NTX7"/>
    </source>
</evidence>
<evidence type="ECO:0000255" key="5">
    <source>
        <dbReference type="PROSITE-ProRule" id="PRU00175"/>
    </source>
</evidence>
<evidence type="ECO:0000255" key="6">
    <source>
        <dbReference type="PROSITE-ProRule" id="PRU00248"/>
    </source>
</evidence>
<evidence type="ECO:0000256" key="7">
    <source>
        <dbReference type="SAM" id="MobiDB-lite"/>
    </source>
</evidence>
<evidence type="ECO:0000305" key="8"/>
<reference key="1">
    <citation type="submission" date="2004-11" db="EMBL/GenBank/DDBJ databases">
        <authorList>
            <consortium name="The German cDNA consortium"/>
        </authorList>
    </citation>
    <scope>NUCLEOTIDE SEQUENCE [LARGE SCALE MRNA]</scope>
    <source>
        <tissue>Heart</tissue>
    </source>
</reference>
<protein>
    <recommendedName>
        <fullName>E3 ubiquitin-protein ligase RNF146</fullName>
        <ecNumber>2.3.2.27</ecNumber>
    </recommendedName>
    <alternativeName>
        <fullName>Iduna</fullName>
    </alternativeName>
    <alternativeName>
        <fullName>RING finger protein 146</fullName>
    </alternativeName>
    <alternativeName>
        <fullName evidence="8">RING-type E3 ubiquitin transferase RNF146</fullName>
    </alternativeName>
</protein>
<gene>
    <name type="primary">RNF146</name>
</gene>
<keyword id="KW-0963">Cytoplasm</keyword>
<keyword id="KW-1017">Isopeptide bond</keyword>
<keyword id="KW-0479">Metal-binding</keyword>
<keyword id="KW-0539">Nucleus</keyword>
<keyword id="KW-0597">Phosphoprotein</keyword>
<keyword id="KW-1185">Reference proteome</keyword>
<keyword id="KW-0808">Transferase</keyword>
<keyword id="KW-0832">Ubl conjugation</keyword>
<keyword id="KW-0833">Ubl conjugation pathway</keyword>
<keyword id="KW-0879">Wnt signaling pathway</keyword>
<keyword id="KW-0862">Zinc</keyword>
<keyword id="KW-0863">Zinc-finger</keyword>
<sequence>MAGCGEIDHSINMLPTNRKANESCSNTAPSLTVPECAICLQTCVHPVSLPCKHVFCYLCVKGASWLGKRCALCRQEIPEDFLDKPTLLSPEELKAASRGNGEYAWYYEGRNGWWQYGERTSRELEDAFSKGKKNTEMLIAGFLYVADLENMVQYRRNEHGRRRKIKRDIIDIPKKGVAGLRLDCDANTVNLARESSADGADSVSAQSGASVQPLVSSVRPLTSVDGQLTSPATPSPDASTSLEDSFAHLQLSGDNTAERSHRGEGEEDHESPSSGRVPAPDTSIEETESDASSDSEDVSAVVAQHSLTQQRLLVSNANQTVPDRSDRSGTDRSVAGGGTVSVSVRSRRPDGQCTVTEV</sequence>
<dbReference type="EC" id="2.3.2.27"/>
<dbReference type="EMBL" id="CR857511">
    <property type="protein sequence ID" value="CAH89794.1"/>
    <property type="molecule type" value="mRNA"/>
</dbReference>
<dbReference type="RefSeq" id="NP_001128751.1">
    <property type="nucleotide sequence ID" value="NM_001135279.1"/>
</dbReference>
<dbReference type="BMRB" id="Q5REL3"/>
<dbReference type="SMR" id="Q5REL3"/>
<dbReference type="FunCoup" id="Q5REL3">
    <property type="interactions" value="2914"/>
</dbReference>
<dbReference type="STRING" id="9601.ENSPPYP00000019028"/>
<dbReference type="GeneID" id="100174320"/>
<dbReference type="CTD" id="81847"/>
<dbReference type="eggNOG" id="KOG0824">
    <property type="taxonomic scope" value="Eukaryota"/>
</dbReference>
<dbReference type="InParanoid" id="Q5REL3"/>
<dbReference type="UniPathway" id="UPA00143"/>
<dbReference type="Proteomes" id="UP000001595">
    <property type="component" value="Unplaced"/>
</dbReference>
<dbReference type="GO" id="GO:0005829">
    <property type="term" value="C:cytosol"/>
    <property type="evidence" value="ECO:0000250"/>
    <property type="project" value="UniProtKB"/>
</dbReference>
<dbReference type="GO" id="GO:0005634">
    <property type="term" value="C:nucleus"/>
    <property type="evidence" value="ECO:0007669"/>
    <property type="project" value="UniProtKB-SubCell"/>
</dbReference>
<dbReference type="GO" id="GO:0072572">
    <property type="term" value="F:poly-ADP-D-ribose binding"/>
    <property type="evidence" value="ECO:0000250"/>
    <property type="project" value="UniProtKB"/>
</dbReference>
<dbReference type="GO" id="GO:0061630">
    <property type="term" value="F:ubiquitin protein ligase activity"/>
    <property type="evidence" value="ECO:0007669"/>
    <property type="project" value="InterPro"/>
</dbReference>
<dbReference type="GO" id="GO:0004842">
    <property type="term" value="F:ubiquitin-protein transferase activity"/>
    <property type="evidence" value="ECO:0000250"/>
    <property type="project" value="UniProtKB"/>
</dbReference>
<dbReference type="GO" id="GO:0008270">
    <property type="term" value="F:zinc ion binding"/>
    <property type="evidence" value="ECO:0007669"/>
    <property type="project" value="UniProtKB-KW"/>
</dbReference>
<dbReference type="GO" id="GO:0090263">
    <property type="term" value="P:positive regulation of canonical Wnt signaling pathway"/>
    <property type="evidence" value="ECO:0000250"/>
    <property type="project" value="UniProtKB"/>
</dbReference>
<dbReference type="GO" id="GO:0051865">
    <property type="term" value="P:protein autoubiquitination"/>
    <property type="evidence" value="ECO:0000250"/>
    <property type="project" value="UniProtKB"/>
</dbReference>
<dbReference type="GO" id="GO:0070936">
    <property type="term" value="P:protein K48-linked ubiquitination"/>
    <property type="evidence" value="ECO:0000250"/>
    <property type="project" value="UniProtKB"/>
</dbReference>
<dbReference type="GO" id="GO:0006511">
    <property type="term" value="P:ubiquitin-dependent protein catabolic process"/>
    <property type="evidence" value="ECO:0000250"/>
    <property type="project" value="UniProtKB"/>
</dbReference>
<dbReference type="GO" id="GO:0016055">
    <property type="term" value="P:Wnt signaling pathway"/>
    <property type="evidence" value="ECO:0007669"/>
    <property type="project" value="UniProtKB-KW"/>
</dbReference>
<dbReference type="CDD" id="cd16546">
    <property type="entry name" value="RING-HC_RNF146"/>
    <property type="match status" value="1"/>
</dbReference>
<dbReference type="FunFam" id="3.30.40.10:FF:000204">
    <property type="entry name" value="E3 ubiquitin-protein ligase RNF146"/>
    <property type="match status" value="1"/>
</dbReference>
<dbReference type="FunFam" id="3.30.720.50:FF:000003">
    <property type="entry name" value="E3 ubiquitin-protein ligase RNF146"/>
    <property type="match status" value="1"/>
</dbReference>
<dbReference type="Gene3D" id="3.30.720.50">
    <property type="match status" value="1"/>
</dbReference>
<dbReference type="Gene3D" id="3.30.40.10">
    <property type="entry name" value="Zinc/RING finger domain, C3HC4 (zinc finger)"/>
    <property type="match status" value="1"/>
</dbReference>
<dbReference type="InterPro" id="IPR044110">
    <property type="entry name" value="RING-HC_RNF146"/>
</dbReference>
<dbReference type="InterPro" id="IPR033509">
    <property type="entry name" value="RNF146"/>
</dbReference>
<dbReference type="InterPro" id="IPR018123">
    <property type="entry name" value="WWE-dom_subgr"/>
</dbReference>
<dbReference type="InterPro" id="IPR004170">
    <property type="entry name" value="WWE_dom"/>
</dbReference>
<dbReference type="InterPro" id="IPR037197">
    <property type="entry name" value="WWE_dom_sf"/>
</dbReference>
<dbReference type="InterPro" id="IPR001841">
    <property type="entry name" value="Znf_RING"/>
</dbReference>
<dbReference type="InterPro" id="IPR013083">
    <property type="entry name" value="Znf_RING/FYVE/PHD"/>
</dbReference>
<dbReference type="InterPro" id="IPR017907">
    <property type="entry name" value="Znf_RING_CS"/>
</dbReference>
<dbReference type="PANTHER" id="PTHR13417">
    <property type="entry name" value="E3 UBIQUITIN-PROTEIN LIGASE RNF146"/>
    <property type="match status" value="1"/>
</dbReference>
<dbReference type="PANTHER" id="PTHR13417:SF2">
    <property type="entry name" value="E3 UBIQUITIN-PROTEIN LIGASE RNF146"/>
    <property type="match status" value="1"/>
</dbReference>
<dbReference type="Pfam" id="PF02825">
    <property type="entry name" value="WWE"/>
    <property type="match status" value="1"/>
</dbReference>
<dbReference type="Pfam" id="PF13920">
    <property type="entry name" value="zf-C3HC4_3"/>
    <property type="match status" value="1"/>
</dbReference>
<dbReference type="SMART" id="SM00184">
    <property type="entry name" value="RING"/>
    <property type="match status" value="1"/>
</dbReference>
<dbReference type="SMART" id="SM00678">
    <property type="entry name" value="WWE"/>
    <property type="match status" value="1"/>
</dbReference>
<dbReference type="SUPFAM" id="SSF57850">
    <property type="entry name" value="RING/U-box"/>
    <property type="match status" value="1"/>
</dbReference>
<dbReference type="SUPFAM" id="SSF117839">
    <property type="entry name" value="WWE domain"/>
    <property type="match status" value="1"/>
</dbReference>
<dbReference type="PROSITE" id="PS50918">
    <property type="entry name" value="WWE"/>
    <property type="match status" value="1"/>
</dbReference>
<dbReference type="PROSITE" id="PS00518">
    <property type="entry name" value="ZF_RING_1"/>
    <property type="match status" value="1"/>
</dbReference>
<dbReference type="PROSITE" id="PS50089">
    <property type="entry name" value="ZF_RING_2"/>
    <property type="match status" value="1"/>
</dbReference>
<feature type="chain" id="PRO_0000056109" description="E3 ubiquitin-protein ligase RNF146">
    <location>
        <begin position="1"/>
        <end position="358"/>
    </location>
</feature>
<feature type="domain" description="WWE" evidence="6">
    <location>
        <begin position="91"/>
        <end position="167"/>
    </location>
</feature>
<feature type="zinc finger region" description="RING-type" evidence="5">
    <location>
        <begin position="36"/>
        <end position="74"/>
    </location>
</feature>
<feature type="region of interest" description="Disordered" evidence="7">
    <location>
        <begin position="253"/>
        <end position="358"/>
    </location>
</feature>
<feature type="compositionally biased region" description="Acidic residues" evidence="7">
    <location>
        <begin position="283"/>
        <end position="297"/>
    </location>
</feature>
<feature type="compositionally biased region" description="Polar residues" evidence="7">
    <location>
        <begin position="305"/>
        <end position="322"/>
    </location>
</feature>
<feature type="binding site" evidence="1">
    <location>
        <position position="107"/>
    </location>
    <ligand>
        <name>a glycoprotein</name>
        <dbReference type="ChEBI" id="CHEBI:17089"/>
    </ligand>
    <ligandPart>
        <name>poly[(1''-&gt;2')-ADP-alpha-D-ribose] group</name>
        <dbReference type="ChEBI" id="CHEBI:157741"/>
    </ligandPart>
</feature>
<feature type="binding site" evidence="1">
    <location>
        <position position="110"/>
    </location>
    <ligand>
        <name>a glycoprotein</name>
        <dbReference type="ChEBI" id="CHEBI:17089"/>
    </ligand>
    <ligandPart>
        <name>poly[(1''-&gt;2')-ADP-alpha-D-ribose] group</name>
        <dbReference type="ChEBI" id="CHEBI:157741"/>
    </ligandPart>
</feature>
<feature type="binding site" evidence="1">
    <location>
        <position position="114"/>
    </location>
    <ligand>
        <name>a glycoprotein</name>
        <dbReference type="ChEBI" id="CHEBI:17089"/>
    </ligand>
    <ligandPart>
        <name>poly[(1''-&gt;2')-ADP-alpha-D-ribose] group</name>
        <dbReference type="ChEBI" id="CHEBI:157741"/>
    </ligandPart>
</feature>
<feature type="binding site" evidence="1">
    <location>
        <position position="144"/>
    </location>
    <ligand>
        <name>a glycoprotein</name>
        <dbReference type="ChEBI" id="CHEBI:17089"/>
    </ligand>
    <ligandPart>
        <name>poly[(1''-&gt;2')-ADP-alpha-D-ribose] group</name>
        <dbReference type="ChEBI" id="CHEBI:157741"/>
    </ligandPart>
</feature>
<feature type="binding site" evidence="1">
    <location>
        <position position="153"/>
    </location>
    <ligand>
        <name>a glycoprotein</name>
        <dbReference type="ChEBI" id="CHEBI:17089"/>
    </ligand>
    <ligandPart>
        <name>poly[(1''-&gt;2')-ADP-alpha-D-ribose] group</name>
        <dbReference type="ChEBI" id="CHEBI:157741"/>
    </ligandPart>
</feature>
<feature type="binding site" evidence="1">
    <location>
        <position position="163"/>
    </location>
    <ligand>
        <name>a glycoprotein</name>
        <dbReference type="ChEBI" id="CHEBI:17089"/>
    </ligand>
    <ligandPart>
        <name>poly[(1''-&gt;2')-ADP-alpha-D-ribose] group</name>
        <dbReference type="ChEBI" id="CHEBI:157741"/>
    </ligandPart>
</feature>
<feature type="binding site" evidence="1">
    <location>
        <position position="175"/>
    </location>
    <ligand>
        <name>a glycoprotein</name>
        <dbReference type="ChEBI" id="CHEBI:17089"/>
    </ligand>
    <ligandPart>
        <name>poly[(1''-&gt;2')-ADP-alpha-D-ribose] group</name>
        <dbReference type="ChEBI" id="CHEBI:157741"/>
    </ligandPart>
</feature>
<feature type="modified residue" description="Phosphoserine" evidence="2">
    <location>
        <position position="289"/>
    </location>
</feature>
<feature type="modified residue" description="Phosphoserine" evidence="2">
    <location>
        <position position="293"/>
    </location>
</feature>
<feature type="cross-link" description="Glycyl lysine isopeptide (Lys-Gly) (interchain with G-Cter in ubiquitin)" evidence="4">
    <location>
        <position position="84"/>
    </location>
</feature>
<feature type="cross-link" description="Glycyl lysine isopeptide (Lys-Gly) (interchain with G-Cter in ubiquitin)" evidence="4">
    <location>
        <position position="94"/>
    </location>
</feature>
<feature type="cross-link" description="Glycyl lysine isopeptide (Lys-Gly) (interchain with G-Cter in ubiquitin)" evidence="4">
    <location>
        <position position="130"/>
    </location>
</feature>
<feature type="cross-link" description="Glycyl lysine isopeptide (Lys-Gly) (interchain with G-Cter in ubiquitin)" evidence="4">
    <location>
        <position position="175"/>
    </location>
</feature>
<organism>
    <name type="scientific">Pongo abelii</name>
    <name type="common">Sumatran orangutan</name>
    <name type="synonym">Pongo pygmaeus abelii</name>
    <dbReference type="NCBI Taxonomy" id="9601"/>
    <lineage>
        <taxon>Eukaryota</taxon>
        <taxon>Metazoa</taxon>
        <taxon>Chordata</taxon>
        <taxon>Craniata</taxon>
        <taxon>Vertebrata</taxon>
        <taxon>Euteleostomi</taxon>
        <taxon>Mammalia</taxon>
        <taxon>Eutheria</taxon>
        <taxon>Euarchontoglires</taxon>
        <taxon>Primates</taxon>
        <taxon>Haplorrhini</taxon>
        <taxon>Catarrhini</taxon>
        <taxon>Hominidae</taxon>
        <taxon>Pongo</taxon>
    </lineage>
</organism>
<accession>Q5REL3</accession>
<proteinExistence type="evidence at transcript level"/>
<name>RN146_PONAB</name>